<feature type="chain" id="PRO_0000305885" description="Bifunctional protein FolD">
    <location>
        <begin position="1"/>
        <end position="282"/>
    </location>
</feature>
<feature type="binding site" evidence="1">
    <location>
        <begin position="164"/>
        <end position="166"/>
    </location>
    <ligand>
        <name>NADP(+)</name>
        <dbReference type="ChEBI" id="CHEBI:58349"/>
    </ligand>
</feature>
<feature type="binding site" evidence="1">
    <location>
        <position position="189"/>
    </location>
    <ligand>
        <name>NADP(+)</name>
        <dbReference type="ChEBI" id="CHEBI:58349"/>
    </ligand>
</feature>
<proteinExistence type="inferred from homology"/>
<dbReference type="EC" id="1.5.1.5" evidence="1"/>
<dbReference type="EC" id="3.5.4.9" evidence="1"/>
<dbReference type="EMBL" id="CP000407">
    <property type="protein sequence ID" value="ABP89463.1"/>
    <property type="molecule type" value="Genomic_DNA"/>
</dbReference>
<dbReference type="SMR" id="A4VTM4"/>
<dbReference type="STRING" id="391295.SSU05_0497"/>
<dbReference type="KEGG" id="ssu:SSU05_0497"/>
<dbReference type="eggNOG" id="COG0190">
    <property type="taxonomic scope" value="Bacteria"/>
</dbReference>
<dbReference type="HOGENOM" id="CLU_034045_2_1_9"/>
<dbReference type="UniPathway" id="UPA00193"/>
<dbReference type="GO" id="GO:0005829">
    <property type="term" value="C:cytosol"/>
    <property type="evidence" value="ECO:0007669"/>
    <property type="project" value="TreeGrafter"/>
</dbReference>
<dbReference type="GO" id="GO:0004477">
    <property type="term" value="F:methenyltetrahydrofolate cyclohydrolase activity"/>
    <property type="evidence" value="ECO:0007669"/>
    <property type="project" value="UniProtKB-UniRule"/>
</dbReference>
<dbReference type="GO" id="GO:0004488">
    <property type="term" value="F:methylenetetrahydrofolate dehydrogenase (NADP+) activity"/>
    <property type="evidence" value="ECO:0007669"/>
    <property type="project" value="UniProtKB-UniRule"/>
</dbReference>
<dbReference type="GO" id="GO:0000105">
    <property type="term" value="P:L-histidine biosynthetic process"/>
    <property type="evidence" value="ECO:0007669"/>
    <property type="project" value="UniProtKB-KW"/>
</dbReference>
<dbReference type="GO" id="GO:0009086">
    <property type="term" value="P:methionine biosynthetic process"/>
    <property type="evidence" value="ECO:0007669"/>
    <property type="project" value="UniProtKB-KW"/>
</dbReference>
<dbReference type="GO" id="GO:0006164">
    <property type="term" value="P:purine nucleotide biosynthetic process"/>
    <property type="evidence" value="ECO:0007669"/>
    <property type="project" value="UniProtKB-KW"/>
</dbReference>
<dbReference type="GO" id="GO:0035999">
    <property type="term" value="P:tetrahydrofolate interconversion"/>
    <property type="evidence" value="ECO:0007669"/>
    <property type="project" value="UniProtKB-UniRule"/>
</dbReference>
<dbReference type="CDD" id="cd01080">
    <property type="entry name" value="NAD_bind_m-THF_DH_Cyclohyd"/>
    <property type="match status" value="1"/>
</dbReference>
<dbReference type="FunFam" id="3.40.50.720:FF:000094">
    <property type="entry name" value="Bifunctional protein FolD"/>
    <property type="match status" value="1"/>
</dbReference>
<dbReference type="FunFam" id="3.40.50.10860:FF:000005">
    <property type="entry name" value="C-1-tetrahydrofolate synthase, cytoplasmic, putative"/>
    <property type="match status" value="1"/>
</dbReference>
<dbReference type="Gene3D" id="3.40.50.10860">
    <property type="entry name" value="Leucine Dehydrogenase, chain A, domain 1"/>
    <property type="match status" value="1"/>
</dbReference>
<dbReference type="Gene3D" id="3.40.50.720">
    <property type="entry name" value="NAD(P)-binding Rossmann-like Domain"/>
    <property type="match status" value="1"/>
</dbReference>
<dbReference type="HAMAP" id="MF_01576">
    <property type="entry name" value="THF_DHG_CYH"/>
    <property type="match status" value="1"/>
</dbReference>
<dbReference type="InterPro" id="IPR046346">
    <property type="entry name" value="Aminoacid_DH-like_N_sf"/>
</dbReference>
<dbReference type="InterPro" id="IPR036291">
    <property type="entry name" value="NAD(P)-bd_dom_sf"/>
</dbReference>
<dbReference type="InterPro" id="IPR000672">
    <property type="entry name" value="THF_DH/CycHdrlase"/>
</dbReference>
<dbReference type="InterPro" id="IPR020630">
    <property type="entry name" value="THF_DH/CycHdrlase_cat_dom"/>
</dbReference>
<dbReference type="InterPro" id="IPR020867">
    <property type="entry name" value="THF_DH/CycHdrlase_CS"/>
</dbReference>
<dbReference type="InterPro" id="IPR020631">
    <property type="entry name" value="THF_DH/CycHdrlase_NAD-bd_dom"/>
</dbReference>
<dbReference type="NCBIfam" id="NF008058">
    <property type="entry name" value="PRK10792.1"/>
    <property type="match status" value="1"/>
</dbReference>
<dbReference type="NCBIfam" id="NF010776">
    <property type="entry name" value="PRK14179.1"/>
    <property type="match status" value="1"/>
</dbReference>
<dbReference type="NCBIfam" id="NF010783">
    <property type="entry name" value="PRK14186.1"/>
    <property type="match status" value="1"/>
</dbReference>
<dbReference type="PANTHER" id="PTHR48099:SF5">
    <property type="entry name" value="C-1-TETRAHYDROFOLATE SYNTHASE, CYTOPLASMIC"/>
    <property type="match status" value="1"/>
</dbReference>
<dbReference type="PANTHER" id="PTHR48099">
    <property type="entry name" value="C-1-TETRAHYDROFOLATE SYNTHASE, CYTOPLASMIC-RELATED"/>
    <property type="match status" value="1"/>
</dbReference>
<dbReference type="Pfam" id="PF00763">
    <property type="entry name" value="THF_DHG_CYH"/>
    <property type="match status" value="1"/>
</dbReference>
<dbReference type="Pfam" id="PF02882">
    <property type="entry name" value="THF_DHG_CYH_C"/>
    <property type="match status" value="1"/>
</dbReference>
<dbReference type="PRINTS" id="PR00085">
    <property type="entry name" value="THFDHDRGNASE"/>
</dbReference>
<dbReference type="SUPFAM" id="SSF53223">
    <property type="entry name" value="Aminoacid dehydrogenase-like, N-terminal domain"/>
    <property type="match status" value="1"/>
</dbReference>
<dbReference type="SUPFAM" id="SSF51735">
    <property type="entry name" value="NAD(P)-binding Rossmann-fold domains"/>
    <property type="match status" value="1"/>
</dbReference>
<dbReference type="PROSITE" id="PS00766">
    <property type="entry name" value="THF_DHG_CYH_1"/>
    <property type="match status" value="1"/>
</dbReference>
<dbReference type="PROSITE" id="PS00767">
    <property type="entry name" value="THF_DHG_CYH_2"/>
    <property type="match status" value="1"/>
</dbReference>
<protein>
    <recommendedName>
        <fullName evidence="1">Bifunctional protein FolD</fullName>
    </recommendedName>
    <domain>
        <recommendedName>
            <fullName evidence="1">Methylenetetrahydrofolate dehydrogenase</fullName>
            <ecNumber evidence="1">1.5.1.5</ecNumber>
        </recommendedName>
    </domain>
    <domain>
        <recommendedName>
            <fullName evidence="1">Methenyltetrahydrofolate cyclohydrolase</fullName>
            <ecNumber evidence="1">3.5.4.9</ecNumber>
        </recommendedName>
    </domain>
</protein>
<gene>
    <name evidence="1" type="primary">folD</name>
    <name type="ordered locus">SSU05_0497</name>
</gene>
<keyword id="KW-0028">Amino-acid biosynthesis</keyword>
<keyword id="KW-0368">Histidine biosynthesis</keyword>
<keyword id="KW-0378">Hydrolase</keyword>
<keyword id="KW-0486">Methionine biosynthesis</keyword>
<keyword id="KW-0511">Multifunctional enzyme</keyword>
<keyword id="KW-0521">NADP</keyword>
<keyword id="KW-0554">One-carbon metabolism</keyword>
<keyword id="KW-0560">Oxidoreductase</keyword>
<keyword id="KW-0658">Purine biosynthesis</keyword>
<accession>A4VTM4</accession>
<reference key="1">
    <citation type="journal article" date="2007" name="PLoS ONE">
        <title>A glimpse of streptococcal toxic shock syndrome from comparative genomics of S. suis 2 Chinese isolates.</title>
        <authorList>
            <person name="Chen C."/>
            <person name="Tang J."/>
            <person name="Dong W."/>
            <person name="Wang C."/>
            <person name="Feng Y."/>
            <person name="Wang J."/>
            <person name="Zheng F."/>
            <person name="Pan X."/>
            <person name="Liu D."/>
            <person name="Li M."/>
            <person name="Song Y."/>
            <person name="Zhu X."/>
            <person name="Sun H."/>
            <person name="Feng T."/>
            <person name="Guo Z."/>
            <person name="Ju A."/>
            <person name="Ge J."/>
            <person name="Dong Y."/>
            <person name="Sun W."/>
            <person name="Jiang Y."/>
            <person name="Wang J."/>
            <person name="Yan J."/>
            <person name="Yang H."/>
            <person name="Wang X."/>
            <person name="Gao G.F."/>
            <person name="Yang R."/>
            <person name="Wang J."/>
            <person name="Yu J."/>
        </authorList>
    </citation>
    <scope>NUCLEOTIDE SEQUENCE [LARGE SCALE GENOMIC DNA]</scope>
    <source>
        <strain>05ZYH33</strain>
    </source>
</reference>
<organism>
    <name type="scientific">Streptococcus suis (strain 05ZYH33)</name>
    <dbReference type="NCBI Taxonomy" id="391295"/>
    <lineage>
        <taxon>Bacteria</taxon>
        <taxon>Bacillati</taxon>
        <taxon>Bacillota</taxon>
        <taxon>Bacilli</taxon>
        <taxon>Lactobacillales</taxon>
        <taxon>Streptococcaceae</taxon>
        <taxon>Streptococcus</taxon>
    </lineage>
</organism>
<name>FOLD_STRSY</name>
<sequence length="282" mass="30651">MTVIDGKALGVKLQAALAEKTARLKEEKGLVPGLVVILVGENPASQVYVRNKERSALAAGFKSEVVRVPDTISESDLLDLIERYNQDDEWHGILVQLPLPAHISEEKVLLAIDPDKDVDGFHPTNMGKFWSGHPVMIPSTPAGIMEMFKEYQIELEGKSALVIGRSNIVGKPMAQLLLDADATVTIAHSRTKNLPDLARQADILVVAIGRGHFVTKEFVKLGAVVIDVGMNRDENGKLIGDVKYDEVSEVASYITPVPGGVGPMTITMLMEQTYEACVRSAK</sequence>
<comment type="function">
    <text evidence="1">Catalyzes the oxidation of 5,10-methylenetetrahydrofolate to 5,10-methenyltetrahydrofolate and then the hydrolysis of 5,10-methenyltetrahydrofolate to 10-formyltetrahydrofolate.</text>
</comment>
<comment type="catalytic activity">
    <reaction evidence="1">
        <text>(6R)-5,10-methylene-5,6,7,8-tetrahydrofolate + NADP(+) = (6R)-5,10-methenyltetrahydrofolate + NADPH</text>
        <dbReference type="Rhea" id="RHEA:22812"/>
        <dbReference type="ChEBI" id="CHEBI:15636"/>
        <dbReference type="ChEBI" id="CHEBI:57455"/>
        <dbReference type="ChEBI" id="CHEBI:57783"/>
        <dbReference type="ChEBI" id="CHEBI:58349"/>
        <dbReference type="EC" id="1.5.1.5"/>
    </reaction>
</comment>
<comment type="catalytic activity">
    <reaction evidence="1">
        <text>(6R)-5,10-methenyltetrahydrofolate + H2O = (6R)-10-formyltetrahydrofolate + H(+)</text>
        <dbReference type="Rhea" id="RHEA:23700"/>
        <dbReference type="ChEBI" id="CHEBI:15377"/>
        <dbReference type="ChEBI" id="CHEBI:15378"/>
        <dbReference type="ChEBI" id="CHEBI:57455"/>
        <dbReference type="ChEBI" id="CHEBI:195366"/>
        <dbReference type="EC" id="3.5.4.9"/>
    </reaction>
</comment>
<comment type="pathway">
    <text evidence="1">One-carbon metabolism; tetrahydrofolate interconversion.</text>
</comment>
<comment type="subunit">
    <text evidence="1">Homodimer.</text>
</comment>
<comment type="similarity">
    <text evidence="1">Belongs to the tetrahydrofolate dehydrogenase/cyclohydrolase family.</text>
</comment>
<evidence type="ECO:0000255" key="1">
    <source>
        <dbReference type="HAMAP-Rule" id="MF_01576"/>
    </source>
</evidence>